<keyword id="KW-0007">Acetylation</keyword>
<keyword id="KW-0963">Cytoplasm</keyword>
<keyword id="KW-0496">Mitochondrion</keyword>
<keyword id="KW-1185">Reference proteome</keyword>
<keyword id="KW-0809">Transit peptide</keyword>
<name>MMAD_RAT</name>
<comment type="function">
    <text evidence="1">Involved in cobalamin metabolism and trafficking. Plays a role in regulating the biosynthesis and the proportion of two coenzymes, methylcob(III)alamin (MeCbl) and 5'-deoxyadenosylcobalamin (AdoCbl). Promotes oxidation of cob(II)alamin bound to MMACHC. The processing of cobalamin in the cytosol occurs in a multiprotein complex composed of at least MMACHC, MMADHC, MTRR (methionine synthase reductase) and MTR (methionine synthase) which may contribute to shuttle safely and efficiently cobalamin towards MTR in order to produce methionine.</text>
</comment>
<comment type="subunit">
    <text evidence="1">Heterodimer with MMACHC. Forms a multiprotein complex with MMACHC, MTR and MTRR.</text>
</comment>
<comment type="subcellular location">
    <subcellularLocation>
        <location evidence="1">Cytoplasm</location>
    </subcellularLocation>
    <subcellularLocation>
        <location evidence="1">Mitochondrion</location>
    </subcellularLocation>
</comment>
<feature type="transit peptide" description="Mitochondrion" evidence="2">
    <location>
        <begin position="1"/>
        <end position="38"/>
    </location>
</feature>
<feature type="chain" id="PRO_0000019536" description="Cobalamin trafficking protein CblD">
    <location>
        <begin position="39"/>
        <end position="296"/>
    </location>
</feature>
<feature type="modified residue" description="N6-acetyllysine" evidence="1">
    <location>
        <position position="203"/>
    </location>
</feature>
<evidence type="ECO:0000250" key="1">
    <source>
        <dbReference type="UniProtKB" id="Q9H3L0"/>
    </source>
</evidence>
<evidence type="ECO:0000255" key="2"/>
<reference key="1">
    <citation type="journal article" date="2004" name="Genome Res.">
        <title>The status, quality, and expansion of the NIH full-length cDNA project: the Mammalian Gene Collection (MGC).</title>
        <authorList>
            <consortium name="The MGC Project Team"/>
        </authorList>
    </citation>
    <scope>NUCLEOTIDE SEQUENCE [LARGE SCALE MRNA]</scope>
    <source>
        <tissue>Kidney</tissue>
    </source>
</reference>
<dbReference type="EMBL" id="BC078953">
    <property type="protein sequence ID" value="AAH78953.1"/>
    <property type="molecule type" value="mRNA"/>
</dbReference>
<dbReference type="RefSeq" id="NP_001004280.1">
    <property type="nucleotide sequence ID" value="NM_001004280.1"/>
</dbReference>
<dbReference type="RefSeq" id="XP_006234220.2">
    <property type="nucleotide sequence ID" value="XM_006234158.4"/>
</dbReference>
<dbReference type="SMR" id="Q6AYQ6"/>
<dbReference type="FunCoup" id="Q6AYQ6">
    <property type="interactions" value="432"/>
</dbReference>
<dbReference type="STRING" id="10116.ENSRNOP00000058814"/>
<dbReference type="PhosphoSitePlus" id="Q6AYQ6"/>
<dbReference type="PaxDb" id="10116-ENSRNOP00000058814"/>
<dbReference type="GeneID" id="362134"/>
<dbReference type="KEGG" id="rno:362134"/>
<dbReference type="UCSC" id="RGD:1303272">
    <property type="organism name" value="rat"/>
</dbReference>
<dbReference type="AGR" id="RGD:1303272"/>
<dbReference type="CTD" id="27249"/>
<dbReference type="RGD" id="1303272">
    <property type="gene designation" value="Mmadhc"/>
</dbReference>
<dbReference type="VEuPathDB" id="HostDB:ENSRNOG00000004740"/>
<dbReference type="eggNOG" id="KOG3994">
    <property type="taxonomic scope" value="Eukaryota"/>
</dbReference>
<dbReference type="HOGENOM" id="CLU_066240_0_0_1"/>
<dbReference type="InParanoid" id="Q6AYQ6"/>
<dbReference type="PhylomeDB" id="Q6AYQ6"/>
<dbReference type="TreeFam" id="TF314208"/>
<dbReference type="Reactome" id="R-RNO-9759218">
    <property type="pathway name" value="Cobalamin (Cbl) metabolism"/>
</dbReference>
<dbReference type="PRO" id="PR:Q6AYQ6"/>
<dbReference type="Proteomes" id="UP000002494">
    <property type="component" value="Chromosome 3"/>
</dbReference>
<dbReference type="Bgee" id="ENSRNOG00000004740">
    <property type="expression patterns" value="Expressed in quadriceps femoris and 20 other cell types or tissues"/>
</dbReference>
<dbReference type="ExpressionAtlas" id="Q6AYQ6">
    <property type="expression patterns" value="baseline and differential"/>
</dbReference>
<dbReference type="GO" id="GO:0005737">
    <property type="term" value="C:cytoplasm"/>
    <property type="evidence" value="ECO:0000250"/>
    <property type="project" value="UniProtKB"/>
</dbReference>
<dbReference type="GO" id="GO:0005829">
    <property type="term" value="C:cytosol"/>
    <property type="evidence" value="ECO:0000266"/>
    <property type="project" value="RGD"/>
</dbReference>
<dbReference type="GO" id="GO:0005739">
    <property type="term" value="C:mitochondrion"/>
    <property type="evidence" value="ECO:0000250"/>
    <property type="project" value="UniProtKB"/>
</dbReference>
<dbReference type="GO" id="GO:0009235">
    <property type="term" value="P:cobalamin metabolic process"/>
    <property type="evidence" value="ECO:0000250"/>
    <property type="project" value="UniProtKB"/>
</dbReference>
<dbReference type="InterPro" id="IPR019362">
    <property type="entry name" value="MMADHC"/>
</dbReference>
<dbReference type="PANTHER" id="PTHR13192:SF3">
    <property type="entry name" value="COBALAMIN TRAFFICKING PROTEIN CBLD"/>
    <property type="match status" value="1"/>
</dbReference>
<dbReference type="PANTHER" id="PTHR13192">
    <property type="entry name" value="MY011 PROTEIN"/>
    <property type="match status" value="1"/>
</dbReference>
<dbReference type="Pfam" id="PF10229">
    <property type="entry name" value="MMADHC"/>
    <property type="match status" value="1"/>
</dbReference>
<protein>
    <recommendedName>
        <fullName>Cobalamin trafficking protein CblD</fullName>
    </recommendedName>
    <alternativeName>
        <fullName evidence="1">CblD</fullName>
    </alternativeName>
    <alternativeName>
        <fullName>Methylmalonic aciduria and homocystinuria type D homolog, mitochondrial</fullName>
    </alternativeName>
</protein>
<organism>
    <name type="scientific">Rattus norvegicus</name>
    <name type="common">Rat</name>
    <dbReference type="NCBI Taxonomy" id="10116"/>
    <lineage>
        <taxon>Eukaryota</taxon>
        <taxon>Metazoa</taxon>
        <taxon>Chordata</taxon>
        <taxon>Craniata</taxon>
        <taxon>Vertebrata</taxon>
        <taxon>Euteleostomi</taxon>
        <taxon>Mammalia</taxon>
        <taxon>Eutheria</taxon>
        <taxon>Euarchontoglires</taxon>
        <taxon>Glires</taxon>
        <taxon>Rodentia</taxon>
        <taxon>Myomorpha</taxon>
        <taxon>Muroidea</taxon>
        <taxon>Muridae</taxon>
        <taxon>Murinae</taxon>
        <taxon>Rattus</taxon>
    </lineage>
</organism>
<proteinExistence type="evidence at transcript level"/>
<sequence>MAHVLCNRARLVSYLPGFCSLVKRVINPRAFSTAGSSGSDESHVATAPPDICSRTVWPDETMGPFGPQDQRFQLPGNIGFDCHLNGTASQKKSQAHKTLPDVLAEPLSTERHEFVMAQYVNEFQDSNAPVEQEISSAETYFESARVECAIQTCPELLRRDFESLFPEVANSKLMILTVTQKTEHDMTVWSEEVEVEREALLEKFINGAKEICYALRAEGYWADFIDPSSGLAFFGPYTNNTLFETDERYRHLGFSVDDLGCCKVIRHGLWGTHVVVGSIFTNATADSHIMRKLSGD</sequence>
<gene>
    <name type="primary">Mmadhc</name>
</gene>
<accession>Q6AYQ6</accession>